<sequence length="461" mass="49556">MNVRVRGIYTTALTELLGGEYDIVQASPPIQRRFEASFPVAVADATVRTSDDRLGAGIAGTADAVDAVGETLSALGRDTFRWTDPAPRGAVFYGEVTETLGSGAVVDLGTVDGDSVEGFLPYNRVEGYVDEGDSYRVQVASPEPPWGDARPSLATALRIPGGLVELRRGSEGGLSETARMADLLPVDPPEGWTPNWSRAADDASLEAMEAALRRASDRAETVMEAVVDADRDEPGRIVAPQAGAWLLFGRESRFELDEYRRQIETTMPGHHRTKAATTAASAAVDFAEALCEPDGAFPFDVVTRQFGPTEGDDVTISHGKPDGRTISLGRGEVTDRDPEAESITVEREMSGGGTYDAIGVKREAGDIATTTFVEGRWWYPTVYCSADGERRGTYVNICTPLEVFPDTVRYVDLHVDVVKGPDGDVRRVDDDELDAAVEAGEISEPLAERAREVAAAIKKAL</sequence>
<dbReference type="EC" id="3.1.26.-" evidence="1"/>
<dbReference type="EMBL" id="CR936257">
    <property type="protein sequence ID" value="CAI48466.1"/>
    <property type="molecule type" value="Genomic_DNA"/>
</dbReference>
<dbReference type="RefSeq" id="WP_011322102.1">
    <property type="nucleotide sequence ID" value="NC_007426.1"/>
</dbReference>
<dbReference type="SMR" id="Q3ITR7"/>
<dbReference type="STRING" id="348780.NP_0750A"/>
<dbReference type="EnsemblBacteria" id="CAI48466">
    <property type="protein sequence ID" value="CAI48466"/>
    <property type="gene ID" value="NP_0750A"/>
</dbReference>
<dbReference type="GeneID" id="3700951"/>
<dbReference type="KEGG" id="nph:NP_0750A"/>
<dbReference type="eggNOG" id="arCOG04307">
    <property type="taxonomic scope" value="Archaea"/>
</dbReference>
<dbReference type="HOGENOM" id="CLU_044303_0_0_2"/>
<dbReference type="OrthoDB" id="84798at2157"/>
<dbReference type="Proteomes" id="UP000002698">
    <property type="component" value="Chromosome"/>
</dbReference>
<dbReference type="GO" id="GO:0035925">
    <property type="term" value="F:mRNA 3'-UTR AU-rich region binding"/>
    <property type="evidence" value="ECO:0007669"/>
    <property type="project" value="UniProtKB-UniRule"/>
</dbReference>
<dbReference type="GO" id="GO:0016891">
    <property type="term" value="F:RNA endonuclease activity, producing 5'-phosphomonoesters"/>
    <property type="evidence" value="ECO:0007669"/>
    <property type="project" value="UniProtKB-UniRule"/>
</dbReference>
<dbReference type="GO" id="GO:0006364">
    <property type="term" value="P:rRNA processing"/>
    <property type="evidence" value="ECO:0007669"/>
    <property type="project" value="UniProtKB-UniRule"/>
</dbReference>
<dbReference type="Gene3D" id="2.40.380.10">
    <property type="entry name" value="FomD-like"/>
    <property type="match status" value="1"/>
</dbReference>
<dbReference type="HAMAP" id="MF_01910">
    <property type="entry name" value="RNA_binding_AU_1"/>
    <property type="match status" value="1"/>
</dbReference>
<dbReference type="InterPro" id="IPR007295">
    <property type="entry name" value="DUF402"/>
</dbReference>
<dbReference type="InterPro" id="IPR035930">
    <property type="entry name" value="FomD-like_sf"/>
</dbReference>
<dbReference type="InterPro" id="IPR050212">
    <property type="entry name" value="Ntdp-like"/>
</dbReference>
<dbReference type="InterPro" id="IPR016730">
    <property type="entry name" value="RNA-bd_FAU-1"/>
</dbReference>
<dbReference type="InterPro" id="IPR003029">
    <property type="entry name" value="S1_domain"/>
</dbReference>
<dbReference type="PANTHER" id="PTHR39159">
    <property type="match status" value="1"/>
</dbReference>
<dbReference type="PANTHER" id="PTHR39159:SF1">
    <property type="entry name" value="UPF0374 PROTEIN YGAC"/>
    <property type="match status" value="1"/>
</dbReference>
<dbReference type="Pfam" id="PF04167">
    <property type="entry name" value="DUF402"/>
    <property type="match status" value="1"/>
</dbReference>
<dbReference type="PIRSF" id="PIRSF018644">
    <property type="entry name" value="RNA-binding_FAU-1"/>
    <property type="match status" value="1"/>
</dbReference>
<dbReference type="SUPFAM" id="SSF159234">
    <property type="entry name" value="FomD-like"/>
    <property type="match status" value="1"/>
</dbReference>
<dbReference type="PROSITE" id="PS50126">
    <property type="entry name" value="S1"/>
    <property type="match status" value="1"/>
</dbReference>
<comment type="function">
    <text evidence="1">Probable RNase involved in rRNA stability through maturation and/or degradation of precursor rRNAs. Binds to RNA in loop regions with AU-rich sequences.</text>
</comment>
<comment type="similarity">
    <text evidence="1">Belongs to the FAU-1 family.</text>
</comment>
<accession>Q3ITR7</accession>
<reference key="1">
    <citation type="journal article" date="2005" name="Genome Res.">
        <title>Living with two extremes: conclusions from the genome sequence of Natronomonas pharaonis.</title>
        <authorList>
            <person name="Falb M."/>
            <person name="Pfeiffer F."/>
            <person name="Palm P."/>
            <person name="Rodewald K."/>
            <person name="Hickmann V."/>
            <person name="Tittor J."/>
            <person name="Oesterhelt D."/>
        </authorList>
    </citation>
    <scope>NUCLEOTIDE SEQUENCE [LARGE SCALE GENOMIC DNA]</scope>
    <source>
        <strain>ATCC 35678 / DSM 2160 / CIP 103997 / JCM 8858 / NBRC 14720 / NCIMB 2260 / Gabara</strain>
    </source>
</reference>
<organism>
    <name type="scientific">Natronomonas pharaonis (strain ATCC 35678 / DSM 2160 / CIP 103997 / JCM 8858 / NBRC 14720 / NCIMB 2260 / Gabara)</name>
    <name type="common">Halobacterium pharaonis</name>
    <dbReference type="NCBI Taxonomy" id="348780"/>
    <lineage>
        <taxon>Archaea</taxon>
        <taxon>Methanobacteriati</taxon>
        <taxon>Methanobacteriota</taxon>
        <taxon>Stenosarchaea group</taxon>
        <taxon>Halobacteria</taxon>
        <taxon>Halobacteriales</taxon>
        <taxon>Haloarculaceae</taxon>
        <taxon>Natronomonas</taxon>
    </lineage>
</organism>
<evidence type="ECO:0000255" key="1">
    <source>
        <dbReference type="HAMAP-Rule" id="MF_01910"/>
    </source>
</evidence>
<proteinExistence type="inferred from homology"/>
<protein>
    <recommendedName>
        <fullName evidence="1">Probable ribonuclease FAU-1</fullName>
        <ecNumber evidence="1">3.1.26.-</ecNumber>
    </recommendedName>
    <alternativeName>
        <fullName evidence="1">RNA-binding protein FAU-1</fullName>
    </alternativeName>
</protein>
<gene>
    <name evidence="1" type="primary">fau-1</name>
    <name type="ordered locus">NP_0750A</name>
</gene>
<keyword id="KW-0255">Endonuclease</keyword>
<keyword id="KW-0378">Hydrolase</keyword>
<keyword id="KW-0540">Nuclease</keyword>
<keyword id="KW-1185">Reference proteome</keyword>
<keyword id="KW-0694">RNA-binding</keyword>
<keyword id="KW-0698">rRNA processing</keyword>
<name>FAU1_NATPD</name>
<feature type="chain" id="PRO_0000334201" description="Probable ribonuclease FAU-1">
    <location>
        <begin position="1"/>
        <end position="461"/>
    </location>
</feature>
<feature type="domain" description="S1 motif" evidence="1">
    <location>
        <begin position="89"/>
        <end position="158"/>
    </location>
</feature>